<reference key="1">
    <citation type="submission" date="2001-07" db="EMBL/GenBank/DDBJ databases">
        <title>Aedes aegypti ribosomal protein L17A.</title>
        <authorList>
            <person name="Morlais I."/>
            <person name="Severson D.W."/>
        </authorList>
    </citation>
    <scope>NUCLEOTIDE SEQUENCE [GENOMIC DNA / MRNA] (RPL23-A)</scope>
    <source>
        <strain>Moyo-R</strain>
        <strain>Red eye</strain>
        <tissue>Midgut</tissue>
    </source>
</reference>
<reference key="2">
    <citation type="submission" date="2001-11" db="EMBL/GenBank/DDBJ databases">
        <title>Single nucleotide polymorphism and codon usage bias in Aedes aegypti.</title>
        <authorList>
            <person name="Morlais I."/>
            <person name="Severson D.W."/>
        </authorList>
    </citation>
    <scope>NUCLEOTIDE SEQUENCE [MRNA] (RPL23-A)</scope>
    <source>
        <tissue>Midgut</tissue>
    </source>
</reference>
<reference key="3">
    <citation type="journal article" date="2007" name="Genome Biol.">
        <title>Analysis of 14 BAC sequences from the Aedes aegypti genome: a benchmark for genome annotation and assembly.</title>
        <authorList>
            <person name="Lobo N.F."/>
            <person name="Campbell K.S."/>
            <person name="Thaner D."/>
            <person name="Debruyn B."/>
            <person name="Koo H."/>
            <person name="Gelbart W.M."/>
            <person name="Loftus B.J."/>
            <person name="Severson D.W."/>
            <person name="Collins F.H."/>
        </authorList>
    </citation>
    <scope>NUCLEOTIDE SEQUENCE [GENOMIC DNA] (RPL23-A)</scope>
</reference>
<reference key="4">
    <citation type="journal article" date="2007" name="Science">
        <title>Genome sequence of Aedes aegypti, a major arbovirus vector.</title>
        <authorList>
            <person name="Nene V."/>
            <person name="Wortman J.R."/>
            <person name="Lawson D."/>
            <person name="Haas B.J."/>
            <person name="Kodira C.D."/>
            <person name="Tu Z.J."/>
            <person name="Loftus B.J."/>
            <person name="Xi Z."/>
            <person name="Megy K."/>
            <person name="Grabherr M."/>
            <person name="Ren Q."/>
            <person name="Zdobnov E.M."/>
            <person name="Lobo N.F."/>
            <person name="Campbell K.S."/>
            <person name="Brown S.E."/>
            <person name="Bonaldo M.F."/>
            <person name="Zhu J."/>
            <person name="Sinkins S.P."/>
            <person name="Hogenkamp D.G."/>
            <person name="Amedeo P."/>
            <person name="Arensburger P."/>
            <person name="Atkinson P.W."/>
            <person name="Bidwell S.L."/>
            <person name="Biedler J."/>
            <person name="Birney E."/>
            <person name="Bruggner R.V."/>
            <person name="Costas J."/>
            <person name="Coy M.R."/>
            <person name="Crabtree J."/>
            <person name="Crawford M."/>
            <person name="DeBruyn B."/>
            <person name="DeCaprio D."/>
            <person name="Eiglmeier K."/>
            <person name="Eisenstadt E."/>
            <person name="El-Dorry H."/>
            <person name="Gelbart W.M."/>
            <person name="Gomes S.L."/>
            <person name="Hammond M."/>
            <person name="Hannick L.I."/>
            <person name="Hogan J.R."/>
            <person name="Holmes M.H."/>
            <person name="Jaffe D."/>
            <person name="Johnston S.J."/>
            <person name="Kennedy R.C."/>
            <person name="Koo H."/>
            <person name="Kravitz S."/>
            <person name="Kriventseva E.V."/>
            <person name="Kulp D."/>
            <person name="Labutti K."/>
            <person name="Lee E."/>
            <person name="Li S."/>
            <person name="Lovin D.D."/>
            <person name="Mao C."/>
            <person name="Mauceli E."/>
            <person name="Menck C.F."/>
            <person name="Miller J.R."/>
            <person name="Montgomery P."/>
            <person name="Mori A."/>
            <person name="Nascimento A.L."/>
            <person name="Naveira H.F."/>
            <person name="Nusbaum C."/>
            <person name="O'Leary S.B."/>
            <person name="Orvis J."/>
            <person name="Pertea M."/>
            <person name="Quesneville H."/>
            <person name="Reidenbach K.R."/>
            <person name="Rogers Y.-H.C."/>
            <person name="Roth C.W."/>
            <person name="Schneider J.R."/>
            <person name="Schatz M."/>
            <person name="Shumway M."/>
            <person name="Stanke M."/>
            <person name="Stinson E.O."/>
            <person name="Tubio J.M.C."/>
            <person name="Vanzee J.P."/>
            <person name="Verjovski-Almeida S."/>
            <person name="Werner D."/>
            <person name="White O.R."/>
            <person name="Wyder S."/>
            <person name="Zeng Q."/>
            <person name="Zhao Q."/>
            <person name="Zhao Y."/>
            <person name="Hill C.A."/>
            <person name="Raikhel A.S."/>
            <person name="Soares M.B."/>
            <person name="Knudson D.L."/>
            <person name="Lee N.H."/>
            <person name="Galagan J."/>
            <person name="Salzberg S.L."/>
            <person name="Paulsen I.T."/>
            <person name="Dimopoulos G."/>
            <person name="Collins F.H."/>
            <person name="Bruce B."/>
            <person name="Fraser-Liggett C.M."/>
            <person name="Severson D.W."/>
        </authorList>
    </citation>
    <scope>NUCLEOTIDE SEQUENCE [LARGE SCALE GENOMIC DNA] (RPL23-A; RPL23-B AND RPL23-C)</scope>
    <source>
        <strain>LVPib12</strain>
    </source>
</reference>
<gene>
    <name type="primary">RpL23-A</name>
    <name type="synonym">RpL17A</name>
    <name type="ORF">AAEL013097</name>
</gene>
<gene>
    <name type="primary">RpL23-B</name>
    <name type="ORF">AAEL013583</name>
</gene>
<gene>
    <name type="primary">RpL23-C</name>
    <name type="ORF">AAEL015006</name>
</gene>
<organism>
    <name type="scientific">Aedes aegypti</name>
    <name type="common">Yellowfever mosquito</name>
    <name type="synonym">Culex aegypti</name>
    <dbReference type="NCBI Taxonomy" id="7159"/>
    <lineage>
        <taxon>Eukaryota</taxon>
        <taxon>Metazoa</taxon>
        <taxon>Ecdysozoa</taxon>
        <taxon>Arthropoda</taxon>
        <taxon>Hexapoda</taxon>
        <taxon>Insecta</taxon>
        <taxon>Pterygota</taxon>
        <taxon>Neoptera</taxon>
        <taxon>Endopterygota</taxon>
        <taxon>Diptera</taxon>
        <taxon>Nematocera</taxon>
        <taxon>Culicoidea</taxon>
        <taxon>Culicidae</taxon>
        <taxon>Culicinae</taxon>
        <taxon>Aedini</taxon>
        <taxon>Aedes</taxon>
        <taxon>Stegomyia</taxon>
    </lineage>
</organism>
<accession>Q9GNE2</accession>
<accession>Q16EV3</accession>
<keyword id="KW-1185">Reference proteome</keyword>
<keyword id="KW-0687">Ribonucleoprotein</keyword>
<keyword id="KW-0689">Ribosomal protein</keyword>
<feature type="chain" id="PRO_0000128622" description="Large ribosomal subunit protein uL14">
    <location>
        <begin position="1"/>
        <end position="140"/>
    </location>
</feature>
<protein>
    <recommendedName>
        <fullName evidence="1">Large ribosomal subunit protein uL14</fullName>
    </recommendedName>
    <alternativeName>
        <fullName>60S ribosomal protein L23</fullName>
    </alternativeName>
    <alternativeName>
        <fullName>AeRpL17A</fullName>
    </alternativeName>
    <alternativeName>
        <fullName>L17A</fullName>
    </alternativeName>
</protein>
<name>RL23_AEDAE</name>
<proteinExistence type="evidence at transcript level"/>
<comment type="similarity">
    <text evidence="1">Belongs to the universal ribosomal protein uL14 family.</text>
</comment>
<sequence length="140" mass="14874">MSKRGRGGSAGGKFRISLGLPVGAVINCADNTGAKNLYVIAVHGIRGRLNRLPAAGVGDMFVATVKKGKPELRKKVMPAVVIRQRKPFRRRDGVFLYFEDNAGVIVNNKGEMKGSAITGPVAKECADLWPRIASNAGSIA</sequence>
<evidence type="ECO:0000305" key="1"/>
<dbReference type="EMBL" id="AF315596">
    <property type="protein sequence ID" value="AAG33863.1"/>
    <property type="molecule type" value="Genomic_DNA"/>
</dbReference>
<dbReference type="EMBL" id="AF315597">
    <property type="protein sequence ID" value="AAG33864.1"/>
    <property type="molecule type" value="Genomic_DNA"/>
</dbReference>
<dbReference type="EMBL" id="AF399675">
    <property type="protein sequence ID" value="AAK94453.1"/>
    <property type="molecule type" value="mRNA"/>
</dbReference>
<dbReference type="EMBL" id="AY064121">
    <property type="protein sequence ID" value="AAL85622.1"/>
    <property type="molecule type" value="mRNA"/>
</dbReference>
<dbReference type="EMBL" id="EF173370">
    <property type="protein sequence ID" value="ABM68599.1"/>
    <property type="molecule type" value="Genomic_DNA"/>
</dbReference>
<dbReference type="EMBL" id="CH477974">
    <property type="protein sequence ID" value="EAT34697.1"/>
    <property type="molecule type" value="Genomic_DNA"/>
</dbReference>
<dbReference type="EMBL" id="CH478060">
    <property type="protein sequence ID" value="EAT34144.1"/>
    <property type="molecule type" value="Genomic_DNA"/>
</dbReference>
<dbReference type="EMBL" id="CH478573">
    <property type="protein sequence ID" value="EAT32767.1"/>
    <property type="molecule type" value="Genomic_DNA"/>
</dbReference>
<dbReference type="RefSeq" id="XP_001650232.1">
    <property type="nucleotide sequence ID" value="XM_001650182.1"/>
</dbReference>
<dbReference type="RefSeq" id="XP_001663308.1">
    <property type="nucleotide sequence ID" value="XM_001663258.1"/>
</dbReference>
<dbReference type="SMR" id="Q9GNE2"/>
<dbReference type="FunCoup" id="Q9GNE2">
    <property type="interactions" value="1454"/>
</dbReference>
<dbReference type="STRING" id="7159.Q9GNE2"/>
<dbReference type="PaxDb" id="7159-AAEL013097-PA"/>
<dbReference type="EnsemblMetazoa" id="AAEL015006-RB">
    <property type="protein sequence ID" value="AAEL015006-PB"/>
    <property type="gene ID" value="AAEL015006"/>
</dbReference>
<dbReference type="GeneID" id="5578243"/>
<dbReference type="KEGG" id="aag:5578243"/>
<dbReference type="CTD" id="9349"/>
<dbReference type="VEuPathDB" id="VectorBase:AAEL015006"/>
<dbReference type="eggNOG" id="KOG0901">
    <property type="taxonomic scope" value="Eukaryota"/>
</dbReference>
<dbReference type="HOGENOM" id="CLU_095071_3_0_1"/>
<dbReference type="InParanoid" id="Q9GNE2"/>
<dbReference type="OMA" id="MIQMQTR"/>
<dbReference type="OrthoDB" id="407959at2759"/>
<dbReference type="PhylomeDB" id="Q9GNE2"/>
<dbReference type="Proteomes" id="UP000008820">
    <property type="component" value="Chromosome 2"/>
</dbReference>
<dbReference type="Proteomes" id="UP000682892">
    <property type="component" value="Chromosome 2"/>
</dbReference>
<dbReference type="Proteomes" id="UP000682892">
    <property type="component" value="Unassembled WGS sequence"/>
</dbReference>
<dbReference type="GO" id="GO:0022625">
    <property type="term" value="C:cytosolic large ribosomal subunit"/>
    <property type="evidence" value="ECO:0007669"/>
    <property type="project" value="TreeGrafter"/>
</dbReference>
<dbReference type="GO" id="GO:0070180">
    <property type="term" value="F:large ribosomal subunit rRNA binding"/>
    <property type="evidence" value="ECO:0007669"/>
    <property type="project" value="TreeGrafter"/>
</dbReference>
<dbReference type="GO" id="GO:0003735">
    <property type="term" value="F:structural constituent of ribosome"/>
    <property type="evidence" value="ECO:0007669"/>
    <property type="project" value="InterPro"/>
</dbReference>
<dbReference type="GO" id="GO:0006412">
    <property type="term" value="P:translation"/>
    <property type="evidence" value="ECO:0007669"/>
    <property type="project" value="InterPro"/>
</dbReference>
<dbReference type="CDD" id="cd00337">
    <property type="entry name" value="Ribosomal_uL14"/>
    <property type="match status" value="1"/>
</dbReference>
<dbReference type="FunFam" id="2.40.150.20:FF:000003">
    <property type="entry name" value="60S ribosomal protein L23"/>
    <property type="match status" value="1"/>
</dbReference>
<dbReference type="Gene3D" id="2.40.150.20">
    <property type="entry name" value="Ribosomal protein L14"/>
    <property type="match status" value="1"/>
</dbReference>
<dbReference type="HAMAP" id="MF_01367">
    <property type="entry name" value="Ribosomal_uL14"/>
    <property type="match status" value="1"/>
</dbReference>
<dbReference type="InterPro" id="IPR000218">
    <property type="entry name" value="Ribosomal_uL14"/>
</dbReference>
<dbReference type="InterPro" id="IPR019972">
    <property type="entry name" value="Ribosomal_uL14_CS"/>
</dbReference>
<dbReference type="InterPro" id="IPR036853">
    <property type="entry name" value="Ribosomal_uL14_sf"/>
</dbReference>
<dbReference type="NCBIfam" id="NF006344">
    <property type="entry name" value="PRK08571.1"/>
    <property type="match status" value="1"/>
</dbReference>
<dbReference type="PANTHER" id="PTHR11761">
    <property type="entry name" value="50S/60S RIBOSOMAL PROTEIN L14/L23"/>
    <property type="match status" value="1"/>
</dbReference>
<dbReference type="PANTHER" id="PTHR11761:SF8">
    <property type="entry name" value="LARGE RIBOSOMAL SUBUNIT PROTEIN UL14"/>
    <property type="match status" value="1"/>
</dbReference>
<dbReference type="Pfam" id="PF00238">
    <property type="entry name" value="Ribosomal_L14"/>
    <property type="match status" value="1"/>
</dbReference>
<dbReference type="SMART" id="SM01374">
    <property type="entry name" value="Ribosomal_L14"/>
    <property type="match status" value="1"/>
</dbReference>
<dbReference type="SUPFAM" id="SSF50193">
    <property type="entry name" value="Ribosomal protein L14"/>
    <property type="match status" value="1"/>
</dbReference>
<dbReference type="PROSITE" id="PS00049">
    <property type="entry name" value="RIBOSOMAL_L14"/>
    <property type="match status" value="1"/>
</dbReference>